<proteinExistence type="evidence at protein level"/>
<reference key="1">
    <citation type="journal article" date="2007" name="PLoS ONE">
        <title>Molecular and structural discrimination of proline racemase and hydroxyproline-2-epimerase from nosocomial and bacterial pathogens.</title>
        <authorList>
            <person name="Goytia M."/>
            <person name="Chamond N."/>
            <person name="Cosson A."/>
            <person name="Coatnoan N."/>
            <person name="Hermant D."/>
            <person name="Berneman A."/>
            <person name="Minoprio P."/>
        </authorList>
    </citation>
    <scope>NUCLEOTIDE SEQUENCE [GENOMIC DNA]</scope>
    <scope>CATALYTIC ACTIVITY</scope>
    <scope>ACTIVITY REGULATION</scope>
    <scope>BIOPHYSICOCHEMICAL PROPERTIES</scope>
    <scope>ROLE IN VIRULENCE</scope>
    <source>
        <strain>544 / Biovar 1</strain>
    </source>
</reference>
<reference key="2">
    <citation type="journal article" date="2005" name="J. Bacteriol.">
        <title>Completion of the genome sequence of Brucella abortus and comparison to the highly similar genomes of Brucella melitensis and Brucella suis.</title>
        <authorList>
            <person name="Halling S.M."/>
            <person name="Peterson-Burch B.D."/>
            <person name="Bricker B.J."/>
            <person name="Zuerner R.L."/>
            <person name="Qing Z."/>
            <person name="Li L.-L."/>
            <person name="Kapur V."/>
            <person name="Alt D.P."/>
            <person name="Olsen S.C."/>
        </authorList>
    </citation>
    <scope>NUCLEOTIDE SEQUENCE [LARGE SCALE GENOMIC DNA]</scope>
    <source>
        <strain>9-941</strain>
    </source>
</reference>
<gene>
    <name type="ordered locus">BruAb1_1773</name>
</gene>
<name>4HYPE_BRUAB</name>
<accession>Q57B94</accession>
<accession>A8DEY8</accession>
<evidence type="ECO:0000250" key="1"/>
<evidence type="ECO:0000250" key="2">
    <source>
        <dbReference type="UniProtKB" id="Q4KGU2"/>
    </source>
</evidence>
<evidence type="ECO:0000269" key="3">
    <source>
    </source>
</evidence>
<evidence type="ECO:0000305" key="4"/>
<keyword id="KW-0413">Isomerase</keyword>
<sequence>MARHSFFCVDGHTCGNPVRLVAGGGPNLNGSTMMEKRAHFLAEYDWIRTGLMFEPRGHDMMSGSILYPPTRPDCDVAVLFIETSGCLPMCGHGTIGTVTMAIEQGLVTPKTPGKLNLDTPAGLVAIEYEQDGQYVERVRLTNVPAFLYAEGLEVECPDLGPIKVDVAYGGNFYAIVEPQENYTDMDDYSALQLIAWSPVLRQRLNEKYKFQHPELPDINRLSHILWTGKPKHPQAHARNAVFYGDKAIDRSPCGTGTSARMAQLAAKGKLKPCDEFIHESIIGSLFHGRVERAAEVAGRPAIVPSIAGWARMTGYNTIFIDDRDPFAHGFSMA</sequence>
<organism>
    <name type="scientific">Brucella abortus biovar 1 (strain 9-941)</name>
    <dbReference type="NCBI Taxonomy" id="262698"/>
    <lineage>
        <taxon>Bacteria</taxon>
        <taxon>Pseudomonadati</taxon>
        <taxon>Pseudomonadota</taxon>
        <taxon>Alphaproteobacteria</taxon>
        <taxon>Hyphomicrobiales</taxon>
        <taxon>Brucellaceae</taxon>
        <taxon>Brucella/Ochrobactrum group</taxon>
        <taxon>Brucella</taxon>
    </lineage>
</organism>
<dbReference type="EC" id="5.1.1.8"/>
<dbReference type="EMBL" id="EF495344">
    <property type="protein sequence ID" value="ABS82396.1"/>
    <property type="molecule type" value="Genomic_DNA"/>
</dbReference>
<dbReference type="EMBL" id="AE017223">
    <property type="protein sequence ID" value="AAX75090.1"/>
    <property type="molecule type" value="Genomic_DNA"/>
</dbReference>
<dbReference type="RefSeq" id="WP_002964871.1">
    <property type="nucleotide sequence ID" value="NC_006932.1"/>
</dbReference>
<dbReference type="SMR" id="Q57B94"/>
<dbReference type="EnsemblBacteria" id="AAX75090">
    <property type="protein sequence ID" value="AAX75090"/>
    <property type="gene ID" value="BruAb1_1773"/>
</dbReference>
<dbReference type="KEGG" id="bmb:BruAb1_1773"/>
<dbReference type="HOGENOM" id="CLU_036729_0_0_5"/>
<dbReference type="BRENDA" id="5.1.1.8">
    <property type="organism ID" value="994"/>
</dbReference>
<dbReference type="Proteomes" id="UP000000540">
    <property type="component" value="Chromosome I"/>
</dbReference>
<dbReference type="GO" id="GO:0047580">
    <property type="term" value="F:4-hydroxyproline epimerase activity"/>
    <property type="evidence" value="ECO:0007669"/>
    <property type="project" value="UniProtKB-EC"/>
</dbReference>
<dbReference type="FunFam" id="3.10.310.10:FF:000005">
    <property type="entry name" value="Proline racemase"/>
    <property type="match status" value="1"/>
</dbReference>
<dbReference type="Gene3D" id="3.10.310.10">
    <property type="entry name" value="Diaminopimelate Epimerase, Chain A, domain 1"/>
    <property type="match status" value="2"/>
</dbReference>
<dbReference type="InterPro" id="IPR008794">
    <property type="entry name" value="Pro_racemase_fam"/>
</dbReference>
<dbReference type="NCBIfam" id="NF010578">
    <property type="entry name" value="PRK13971.1"/>
    <property type="match status" value="1"/>
</dbReference>
<dbReference type="PANTHER" id="PTHR33442">
    <property type="entry name" value="TRANS-3-HYDROXY-L-PROLINE DEHYDRATASE"/>
    <property type="match status" value="1"/>
</dbReference>
<dbReference type="PANTHER" id="PTHR33442:SF1">
    <property type="entry name" value="TRANS-3-HYDROXY-L-PROLINE DEHYDRATASE"/>
    <property type="match status" value="1"/>
</dbReference>
<dbReference type="Pfam" id="PF05544">
    <property type="entry name" value="Pro_racemase"/>
    <property type="match status" value="1"/>
</dbReference>
<dbReference type="PIRSF" id="PIRSF029792">
    <property type="entry name" value="Pro_racemase"/>
    <property type="match status" value="1"/>
</dbReference>
<dbReference type="SFLD" id="SFLDS00028">
    <property type="entry name" value="Proline_Racemase"/>
    <property type="match status" value="1"/>
</dbReference>
<dbReference type="SUPFAM" id="SSF54506">
    <property type="entry name" value="Diaminopimelate epimerase-like"/>
    <property type="match status" value="1"/>
</dbReference>
<comment type="function">
    <text evidence="3">Allows intracellular utilization of 4-hydroxyproline, one of the major constituents of host collagen, by converting 4-hydroxy-L-proline to 4-hydroxy-D-proline, which can be further metabolized by intracellular 4-hydroxy-D-proline oxidases. Strong B-cell mitogen. Plays an important role in the regulation of intra- and extracellular amino acid pools, allowing the bacterium to profit from host precursors and enzymatic pathways.</text>
</comment>
<comment type="catalytic activity">
    <reaction evidence="3">
        <text>trans-4-hydroxy-L-proline = cis-4-hydroxy-D-proline</text>
        <dbReference type="Rhea" id="RHEA:21152"/>
        <dbReference type="ChEBI" id="CHEBI:57690"/>
        <dbReference type="ChEBI" id="CHEBI:58375"/>
        <dbReference type="EC" id="5.1.1.8"/>
    </reaction>
</comment>
<comment type="activity regulation">
    <text evidence="3">Inhibited by iodoacetate, iodoacetamide and by high amounts (10 mM) of pyrrole-2-carboxylic acid (PYC). Not inhibited by PYC at 1 mM.</text>
</comment>
<comment type="biophysicochemical properties">
    <kinetics>
        <KM evidence="3">9.8 mM for 4-hydroxy-L-proline</KM>
        <KM evidence="3">10.8 mM for 4-hydroxy-D-proline</KM>
        <Vmax evidence="3">0.4 uM/sec/mg enzyme with L-proline as substrate (at 37 degrees Celsius)</Vmax>
        <Vmax evidence="3">0.75 uM/sec/mg enzyme with D-proline as substrate (at 37 degrees Celsius)</Vmax>
    </kinetics>
</comment>
<comment type="subunit">
    <text evidence="1">Homodimer.</text>
</comment>
<comment type="miscellaneous">
    <text>This enzyme does not require pyridoxal phosphate (PLP) as a cofactor.</text>
</comment>
<comment type="similarity">
    <text evidence="4">Belongs to the proline racemase family.</text>
</comment>
<feature type="chain" id="PRO_0000354027" description="4-hydroxyproline epimerase">
    <location>
        <begin position="1"/>
        <end position="333"/>
    </location>
</feature>
<feature type="active site" description="Proton acceptor" evidence="2">
    <location>
        <position position="90"/>
    </location>
</feature>
<feature type="active site" description="Proton donor" evidence="2">
    <location>
        <position position="253"/>
    </location>
</feature>
<feature type="binding site" evidence="2">
    <location>
        <begin position="91"/>
        <end position="92"/>
    </location>
    <ligand>
        <name>substrate</name>
    </ligand>
</feature>
<feature type="binding site" evidence="2">
    <location>
        <position position="249"/>
    </location>
    <ligand>
        <name>substrate</name>
    </ligand>
</feature>
<feature type="binding site" evidence="2">
    <location>
        <begin position="254"/>
        <end position="255"/>
    </location>
    <ligand>
        <name>substrate</name>
    </ligand>
</feature>
<protein>
    <recommendedName>
        <fullName>4-hydroxyproline epimerase</fullName>
        <ecNumber>5.1.1.8</ecNumber>
    </recommendedName>
    <alternativeName>
        <fullName>Hydroxyproline-2-epimerase</fullName>
        <shortName>BaHyPRE</shortName>
    </alternativeName>
</protein>